<feature type="chain" id="PRO_0000170612" description="Guanylate kinase">
    <location>
        <begin position="1"/>
        <end position="209"/>
    </location>
</feature>
<feature type="domain" description="Guanylate kinase-like" evidence="1">
    <location>
        <begin position="5"/>
        <end position="184"/>
    </location>
</feature>
<feature type="binding site" evidence="1">
    <location>
        <begin position="12"/>
        <end position="19"/>
    </location>
    <ligand>
        <name>ATP</name>
        <dbReference type="ChEBI" id="CHEBI:30616"/>
    </ligand>
</feature>
<accession>P65220</accession>
<accession>Q8E1P1</accession>
<accession>Q8E756</accession>
<keyword id="KW-0067">ATP-binding</keyword>
<keyword id="KW-0963">Cytoplasm</keyword>
<keyword id="KW-0418">Kinase</keyword>
<keyword id="KW-0547">Nucleotide-binding</keyword>
<keyword id="KW-0808">Transferase</keyword>
<name>KGUA_STRA3</name>
<gene>
    <name evidence="1" type="primary">gmk</name>
    <name type="ordered locus">gbs0301</name>
</gene>
<proteinExistence type="inferred from homology"/>
<dbReference type="EC" id="2.7.4.8" evidence="1"/>
<dbReference type="EMBL" id="AL766844">
    <property type="protein sequence ID" value="CAD45946.1"/>
    <property type="molecule type" value="Genomic_DNA"/>
</dbReference>
<dbReference type="RefSeq" id="WP_000003861.1">
    <property type="nucleotide sequence ID" value="NC_004368.1"/>
</dbReference>
<dbReference type="SMR" id="P65220"/>
<dbReference type="GeneID" id="66885285"/>
<dbReference type="KEGG" id="san:gbs0301"/>
<dbReference type="eggNOG" id="COG0194">
    <property type="taxonomic scope" value="Bacteria"/>
</dbReference>
<dbReference type="HOGENOM" id="CLU_001715_1_0_9"/>
<dbReference type="Proteomes" id="UP000000823">
    <property type="component" value="Chromosome"/>
</dbReference>
<dbReference type="GO" id="GO:0005829">
    <property type="term" value="C:cytosol"/>
    <property type="evidence" value="ECO:0007669"/>
    <property type="project" value="TreeGrafter"/>
</dbReference>
<dbReference type="GO" id="GO:0005524">
    <property type="term" value="F:ATP binding"/>
    <property type="evidence" value="ECO:0007669"/>
    <property type="project" value="UniProtKB-UniRule"/>
</dbReference>
<dbReference type="GO" id="GO:0004385">
    <property type="term" value="F:guanylate kinase activity"/>
    <property type="evidence" value="ECO:0007669"/>
    <property type="project" value="UniProtKB-UniRule"/>
</dbReference>
<dbReference type="CDD" id="cd00071">
    <property type="entry name" value="GMPK"/>
    <property type="match status" value="1"/>
</dbReference>
<dbReference type="FunFam" id="3.40.50.300:FF:000855">
    <property type="entry name" value="Guanylate kinase"/>
    <property type="match status" value="1"/>
</dbReference>
<dbReference type="FunFam" id="3.30.63.10:FF:000002">
    <property type="entry name" value="Guanylate kinase 1"/>
    <property type="match status" value="1"/>
</dbReference>
<dbReference type="Gene3D" id="3.30.63.10">
    <property type="entry name" value="Guanylate Kinase phosphate binding domain"/>
    <property type="match status" value="1"/>
</dbReference>
<dbReference type="Gene3D" id="3.40.50.300">
    <property type="entry name" value="P-loop containing nucleotide triphosphate hydrolases"/>
    <property type="match status" value="2"/>
</dbReference>
<dbReference type="HAMAP" id="MF_00328">
    <property type="entry name" value="Guanylate_kinase"/>
    <property type="match status" value="1"/>
</dbReference>
<dbReference type="InterPro" id="IPR008145">
    <property type="entry name" value="GK/Ca_channel_bsu"/>
</dbReference>
<dbReference type="InterPro" id="IPR008144">
    <property type="entry name" value="Guanylate_kin-like_dom"/>
</dbReference>
<dbReference type="InterPro" id="IPR017665">
    <property type="entry name" value="Guanylate_kinase"/>
</dbReference>
<dbReference type="InterPro" id="IPR020590">
    <property type="entry name" value="Guanylate_kinase_CS"/>
</dbReference>
<dbReference type="InterPro" id="IPR027417">
    <property type="entry name" value="P-loop_NTPase"/>
</dbReference>
<dbReference type="NCBIfam" id="TIGR03263">
    <property type="entry name" value="guanyl_kin"/>
    <property type="match status" value="1"/>
</dbReference>
<dbReference type="PANTHER" id="PTHR23117:SF13">
    <property type="entry name" value="GUANYLATE KINASE"/>
    <property type="match status" value="1"/>
</dbReference>
<dbReference type="PANTHER" id="PTHR23117">
    <property type="entry name" value="GUANYLATE KINASE-RELATED"/>
    <property type="match status" value="1"/>
</dbReference>
<dbReference type="Pfam" id="PF00625">
    <property type="entry name" value="Guanylate_kin"/>
    <property type="match status" value="1"/>
</dbReference>
<dbReference type="SMART" id="SM00072">
    <property type="entry name" value="GuKc"/>
    <property type="match status" value="1"/>
</dbReference>
<dbReference type="SUPFAM" id="SSF52540">
    <property type="entry name" value="P-loop containing nucleoside triphosphate hydrolases"/>
    <property type="match status" value="1"/>
</dbReference>
<dbReference type="PROSITE" id="PS00856">
    <property type="entry name" value="GUANYLATE_KINASE_1"/>
    <property type="match status" value="1"/>
</dbReference>
<dbReference type="PROSITE" id="PS50052">
    <property type="entry name" value="GUANYLATE_KINASE_2"/>
    <property type="match status" value="1"/>
</dbReference>
<comment type="function">
    <text evidence="1">Essential for recycling GMP and indirectly, cGMP.</text>
</comment>
<comment type="catalytic activity">
    <reaction evidence="1">
        <text>GMP + ATP = GDP + ADP</text>
        <dbReference type="Rhea" id="RHEA:20780"/>
        <dbReference type="ChEBI" id="CHEBI:30616"/>
        <dbReference type="ChEBI" id="CHEBI:58115"/>
        <dbReference type="ChEBI" id="CHEBI:58189"/>
        <dbReference type="ChEBI" id="CHEBI:456216"/>
        <dbReference type="EC" id="2.7.4.8"/>
    </reaction>
</comment>
<comment type="subcellular location">
    <subcellularLocation>
        <location evidence="1">Cytoplasm</location>
    </subcellularLocation>
</comment>
<comment type="similarity">
    <text evidence="1">Belongs to the guanylate kinase family.</text>
</comment>
<evidence type="ECO:0000255" key="1">
    <source>
        <dbReference type="HAMAP-Rule" id="MF_00328"/>
    </source>
</evidence>
<sequence length="209" mass="23844">MSERGLLIVFSGPSGVGKGTVRQEIFSTPDHKFDYSVSMTTRPQRPGEVDGVDYFFRTREEFEALIKEGQMLEYAEYVGNYYGTPLSYVNETLDKGIDVFLEIEVQGALQVKSKVPDGVFIFLTPPDLEELEERLVGRGTDSPEVIAQRIERAKEEIALMREYDYAVVNDQVSLAAERVKRVIEAEHYRVDRVIGRYTNMVKETDKKLS</sequence>
<protein>
    <recommendedName>
        <fullName evidence="1">Guanylate kinase</fullName>
        <ecNumber evidence="1">2.7.4.8</ecNumber>
    </recommendedName>
    <alternativeName>
        <fullName evidence="1">GMP kinase</fullName>
    </alternativeName>
</protein>
<reference key="1">
    <citation type="journal article" date="2002" name="Mol. Microbiol.">
        <title>Genome sequence of Streptococcus agalactiae, a pathogen causing invasive neonatal disease.</title>
        <authorList>
            <person name="Glaser P."/>
            <person name="Rusniok C."/>
            <person name="Buchrieser C."/>
            <person name="Chevalier F."/>
            <person name="Frangeul L."/>
            <person name="Msadek T."/>
            <person name="Zouine M."/>
            <person name="Couve E."/>
            <person name="Lalioui L."/>
            <person name="Poyart C."/>
            <person name="Trieu-Cuot P."/>
            <person name="Kunst F."/>
        </authorList>
    </citation>
    <scope>NUCLEOTIDE SEQUENCE [LARGE SCALE GENOMIC DNA]</scope>
    <source>
        <strain>NEM316</strain>
    </source>
</reference>
<organism>
    <name type="scientific">Streptococcus agalactiae serotype III (strain NEM316)</name>
    <dbReference type="NCBI Taxonomy" id="211110"/>
    <lineage>
        <taxon>Bacteria</taxon>
        <taxon>Bacillati</taxon>
        <taxon>Bacillota</taxon>
        <taxon>Bacilli</taxon>
        <taxon>Lactobacillales</taxon>
        <taxon>Streptococcaceae</taxon>
        <taxon>Streptococcus</taxon>
    </lineage>
</organism>